<protein>
    <recommendedName>
        <fullName evidence="1">Shikimate dehydrogenase (NADP(+))</fullName>
        <shortName evidence="1">SDH</shortName>
        <ecNumber evidence="1">1.1.1.25</ecNumber>
    </recommendedName>
</protein>
<gene>
    <name evidence="1" type="primary">aroE</name>
    <name type="ordered locus">SAS1533</name>
</gene>
<dbReference type="EC" id="1.1.1.25" evidence="1"/>
<dbReference type="EMBL" id="BX571857">
    <property type="protein sequence ID" value="CAG43334.1"/>
    <property type="molecule type" value="Genomic_DNA"/>
</dbReference>
<dbReference type="RefSeq" id="WP_000666748.1">
    <property type="nucleotide sequence ID" value="NC_002953.3"/>
</dbReference>
<dbReference type="SMR" id="Q6G8X2"/>
<dbReference type="KEGG" id="sas:SAS1533"/>
<dbReference type="HOGENOM" id="CLU_044063_4_1_9"/>
<dbReference type="UniPathway" id="UPA00053">
    <property type="reaction ID" value="UER00087"/>
</dbReference>
<dbReference type="GO" id="GO:0005829">
    <property type="term" value="C:cytosol"/>
    <property type="evidence" value="ECO:0007669"/>
    <property type="project" value="TreeGrafter"/>
</dbReference>
<dbReference type="GO" id="GO:0050661">
    <property type="term" value="F:NADP binding"/>
    <property type="evidence" value="ECO:0007669"/>
    <property type="project" value="InterPro"/>
</dbReference>
<dbReference type="GO" id="GO:0004764">
    <property type="term" value="F:shikimate 3-dehydrogenase (NADP+) activity"/>
    <property type="evidence" value="ECO:0007669"/>
    <property type="project" value="UniProtKB-UniRule"/>
</dbReference>
<dbReference type="GO" id="GO:0008652">
    <property type="term" value="P:amino acid biosynthetic process"/>
    <property type="evidence" value="ECO:0007669"/>
    <property type="project" value="UniProtKB-KW"/>
</dbReference>
<dbReference type="GO" id="GO:0009073">
    <property type="term" value="P:aromatic amino acid family biosynthetic process"/>
    <property type="evidence" value="ECO:0007669"/>
    <property type="project" value="UniProtKB-KW"/>
</dbReference>
<dbReference type="GO" id="GO:0009423">
    <property type="term" value="P:chorismate biosynthetic process"/>
    <property type="evidence" value="ECO:0007669"/>
    <property type="project" value="UniProtKB-UniRule"/>
</dbReference>
<dbReference type="GO" id="GO:0019632">
    <property type="term" value="P:shikimate metabolic process"/>
    <property type="evidence" value="ECO:0007669"/>
    <property type="project" value="InterPro"/>
</dbReference>
<dbReference type="CDD" id="cd01065">
    <property type="entry name" value="NAD_bind_Shikimate_DH"/>
    <property type="match status" value="1"/>
</dbReference>
<dbReference type="FunFam" id="3.40.50.10860:FF:000016">
    <property type="entry name" value="Shikimate dehydrogenase (NADP(+))"/>
    <property type="match status" value="1"/>
</dbReference>
<dbReference type="FunFam" id="3.40.50.720:FF:000445">
    <property type="entry name" value="Shikimate dehydrogenase (NADP(+))"/>
    <property type="match status" value="1"/>
</dbReference>
<dbReference type="Gene3D" id="3.40.50.10860">
    <property type="entry name" value="Leucine Dehydrogenase, chain A, domain 1"/>
    <property type="match status" value="1"/>
</dbReference>
<dbReference type="Gene3D" id="3.40.50.720">
    <property type="entry name" value="NAD(P)-binding Rossmann-like Domain"/>
    <property type="match status" value="1"/>
</dbReference>
<dbReference type="HAMAP" id="MF_00222">
    <property type="entry name" value="Shikimate_DH_AroE"/>
    <property type="match status" value="1"/>
</dbReference>
<dbReference type="InterPro" id="IPR046346">
    <property type="entry name" value="Aminoacid_DH-like_N_sf"/>
</dbReference>
<dbReference type="InterPro" id="IPR036291">
    <property type="entry name" value="NAD(P)-bd_dom_sf"/>
</dbReference>
<dbReference type="InterPro" id="IPR041121">
    <property type="entry name" value="SDH_C"/>
</dbReference>
<dbReference type="InterPro" id="IPR011342">
    <property type="entry name" value="Shikimate_DH"/>
</dbReference>
<dbReference type="InterPro" id="IPR013708">
    <property type="entry name" value="Shikimate_DH-bd_N"/>
</dbReference>
<dbReference type="InterPro" id="IPR022893">
    <property type="entry name" value="Shikimate_DH_fam"/>
</dbReference>
<dbReference type="InterPro" id="IPR006151">
    <property type="entry name" value="Shikm_DH/Glu-tRNA_Rdtase"/>
</dbReference>
<dbReference type="NCBIfam" id="TIGR00507">
    <property type="entry name" value="aroE"/>
    <property type="match status" value="1"/>
</dbReference>
<dbReference type="PANTHER" id="PTHR21089:SF1">
    <property type="entry name" value="BIFUNCTIONAL 3-DEHYDROQUINATE DEHYDRATASE_SHIKIMATE DEHYDROGENASE, CHLOROPLASTIC"/>
    <property type="match status" value="1"/>
</dbReference>
<dbReference type="PANTHER" id="PTHR21089">
    <property type="entry name" value="SHIKIMATE DEHYDROGENASE"/>
    <property type="match status" value="1"/>
</dbReference>
<dbReference type="Pfam" id="PF18317">
    <property type="entry name" value="SDH_C"/>
    <property type="match status" value="1"/>
</dbReference>
<dbReference type="Pfam" id="PF01488">
    <property type="entry name" value="Shikimate_DH"/>
    <property type="match status" value="1"/>
</dbReference>
<dbReference type="Pfam" id="PF08501">
    <property type="entry name" value="Shikimate_dh_N"/>
    <property type="match status" value="1"/>
</dbReference>
<dbReference type="SUPFAM" id="SSF53223">
    <property type="entry name" value="Aminoacid dehydrogenase-like, N-terminal domain"/>
    <property type="match status" value="1"/>
</dbReference>
<dbReference type="SUPFAM" id="SSF51735">
    <property type="entry name" value="NAD(P)-binding Rossmann-fold domains"/>
    <property type="match status" value="1"/>
</dbReference>
<evidence type="ECO:0000255" key="1">
    <source>
        <dbReference type="HAMAP-Rule" id="MF_00222"/>
    </source>
</evidence>
<keyword id="KW-0028">Amino-acid biosynthesis</keyword>
<keyword id="KW-0057">Aromatic amino acid biosynthesis</keyword>
<keyword id="KW-0521">NADP</keyword>
<keyword id="KW-0560">Oxidoreductase</keyword>
<name>AROE_STAAS</name>
<organism>
    <name type="scientific">Staphylococcus aureus (strain MSSA476)</name>
    <dbReference type="NCBI Taxonomy" id="282459"/>
    <lineage>
        <taxon>Bacteria</taxon>
        <taxon>Bacillati</taxon>
        <taxon>Bacillota</taxon>
        <taxon>Bacilli</taxon>
        <taxon>Bacillales</taxon>
        <taxon>Staphylococcaceae</taxon>
        <taxon>Staphylococcus</taxon>
    </lineage>
</organism>
<feature type="chain" id="PRO_0000136034" description="Shikimate dehydrogenase (NADP(+))">
    <location>
        <begin position="1"/>
        <end position="268"/>
    </location>
</feature>
<feature type="active site" description="Proton acceptor" evidence="1">
    <location>
        <position position="64"/>
    </location>
</feature>
<feature type="binding site" evidence="1">
    <location>
        <begin position="13"/>
        <end position="15"/>
    </location>
    <ligand>
        <name>shikimate</name>
        <dbReference type="ChEBI" id="CHEBI:36208"/>
    </ligand>
</feature>
<feature type="binding site" evidence="1">
    <location>
        <position position="60"/>
    </location>
    <ligand>
        <name>shikimate</name>
        <dbReference type="ChEBI" id="CHEBI:36208"/>
    </ligand>
</feature>
<feature type="binding site" evidence="1">
    <location>
        <position position="76"/>
    </location>
    <ligand>
        <name>NADP(+)</name>
        <dbReference type="ChEBI" id="CHEBI:58349"/>
    </ligand>
</feature>
<feature type="binding site" evidence="1">
    <location>
        <position position="85"/>
    </location>
    <ligand>
        <name>shikimate</name>
        <dbReference type="ChEBI" id="CHEBI:36208"/>
    </ligand>
</feature>
<feature type="binding site" evidence="1">
    <location>
        <position position="100"/>
    </location>
    <ligand>
        <name>shikimate</name>
        <dbReference type="ChEBI" id="CHEBI:36208"/>
    </ligand>
</feature>
<feature type="binding site" evidence="1">
    <location>
        <begin position="124"/>
        <end position="128"/>
    </location>
    <ligand>
        <name>NADP(+)</name>
        <dbReference type="ChEBI" id="CHEBI:58349"/>
    </ligand>
</feature>
<feature type="binding site" evidence="1">
    <location>
        <begin position="148"/>
        <end position="153"/>
    </location>
    <ligand>
        <name>NADP(+)</name>
        <dbReference type="ChEBI" id="CHEBI:58349"/>
    </ligand>
</feature>
<feature type="binding site" evidence="1">
    <location>
        <position position="209"/>
    </location>
    <ligand>
        <name>NADP(+)</name>
        <dbReference type="ChEBI" id="CHEBI:58349"/>
    </ligand>
</feature>
<feature type="binding site" evidence="1">
    <location>
        <position position="211"/>
    </location>
    <ligand>
        <name>shikimate</name>
        <dbReference type="ChEBI" id="CHEBI:36208"/>
    </ligand>
</feature>
<feature type="binding site" evidence="1">
    <location>
        <position position="232"/>
    </location>
    <ligand>
        <name>NADP(+)</name>
        <dbReference type="ChEBI" id="CHEBI:58349"/>
    </ligand>
</feature>
<proteinExistence type="inferred from homology"/>
<reference key="1">
    <citation type="journal article" date="2004" name="Proc. Natl. Acad. Sci. U.S.A.">
        <title>Complete genomes of two clinical Staphylococcus aureus strains: evidence for the rapid evolution of virulence and drug resistance.</title>
        <authorList>
            <person name="Holden M.T.G."/>
            <person name="Feil E.J."/>
            <person name="Lindsay J.A."/>
            <person name="Peacock S.J."/>
            <person name="Day N.P.J."/>
            <person name="Enright M.C."/>
            <person name="Foster T.J."/>
            <person name="Moore C.E."/>
            <person name="Hurst L."/>
            <person name="Atkin R."/>
            <person name="Barron A."/>
            <person name="Bason N."/>
            <person name="Bentley S.D."/>
            <person name="Chillingworth C."/>
            <person name="Chillingworth T."/>
            <person name="Churcher C."/>
            <person name="Clark L."/>
            <person name="Corton C."/>
            <person name="Cronin A."/>
            <person name="Doggett J."/>
            <person name="Dowd L."/>
            <person name="Feltwell T."/>
            <person name="Hance Z."/>
            <person name="Harris B."/>
            <person name="Hauser H."/>
            <person name="Holroyd S."/>
            <person name="Jagels K."/>
            <person name="James K.D."/>
            <person name="Lennard N."/>
            <person name="Line A."/>
            <person name="Mayes R."/>
            <person name="Moule S."/>
            <person name="Mungall K."/>
            <person name="Ormond D."/>
            <person name="Quail M.A."/>
            <person name="Rabbinowitsch E."/>
            <person name="Rutherford K.M."/>
            <person name="Sanders M."/>
            <person name="Sharp S."/>
            <person name="Simmonds M."/>
            <person name="Stevens K."/>
            <person name="Whitehead S."/>
            <person name="Barrell B.G."/>
            <person name="Spratt B.G."/>
            <person name="Parkhill J."/>
        </authorList>
    </citation>
    <scope>NUCLEOTIDE SEQUENCE [LARGE SCALE GENOMIC DNA]</scope>
    <source>
        <strain>MSSA476</strain>
    </source>
</reference>
<sequence>MKFAVIGNPISHSLSPVMHRANFNSLGLDDTYEALNIPIEDFHLIKEIISKKELDGFNITIPHKERIIPYLDHVDEQAINAGAVNTVLIKDDKWIGYNTDGIGYVKGLHSVYPDLENAYILILGAGGASKGIAYELAKFVKPKLTVANRTMARFESWNLNINQISLADAEKYLAEFDIVINTTPAGMAGNNESIINLKHLSPNTLMSDIVYIPYKTPILEEAERKGNHIYNGLDMFVYQGAESFKIWTNKDADINSMKTAVLQQLKGE</sequence>
<comment type="function">
    <text evidence="1">Involved in the biosynthesis of the chorismate, which leads to the biosynthesis of aromatic amino acids. Catalyzes the reversible NADPH linked reduction of 3-dehydroshikimate (DHSA) to yield shikimate (SA).</text>
</comment>
<comment type="catalytic activity">
    <reaction evidence="1">
        <text>shikimate + NADP(+) = 3-dehydroshikimate + NADPH + H(+)</text>
        <dbReference type="Rhea" id="RHEA:17737"/>
        <dbReference type="ChEBI" id="CHEBI:15378"/>
        <dbReference type="ChEBI" id="CHEBI:16630"/>
        <dbReference type="ChEBI" id="CHEBI:36208"/>
        <dbReference type="ChEBI" id="CHEBI:57783"/>
        <dbReference type="ChEBI" id="CHEBI:58349"/>
        <dbReference type="EC" id="1.1.1.25"/>
    </reaction>
</comment>
<comment type="pathway">
    <text evidence="1">Metabolic intermediate biosynthesis; chorismate biosynthesis; chorismate from D-erythrose 4-phosphate and phosphoenolpyruvate: step 4/7.</text>
</comment>
<comment type="subunit">
    <text evidence="1">Homodimer.</text>
</comment>
<comment type="similarity">
    <text evidence="1">Belongs to the shikimate dehydrogenase family.</text>
</comment>
<accession>Q6G8X2</accession>